<organism>
    <name type="scientific">Coxiella burnetii (strain RSA 493 / Nine Mile phase I)</name>
    <dbReference type="NCBI Taxonomy" id="227377"/>
    <lineage>
        <taxon>Bacteria</taxon>
        <taxon>Pseudomonadati</taxon>
        <taxon>Pseudomonadota</taxon>
        <taxon>Gammaproteobacteria</taxon>
        <taxon>Legionellales</taxon>
        <taxon>Coxiellaceae</taxon>
        <taxon>Coxiella</taxon>
    </lineage>
</organism>
<feature type="chain" id="PRO_0000119550" description="Glutamate--tRNA ligase 1">
    <location>
        <begin position="1"/>
        <end position="469"/>
    </location>
</feature>
<feature type="short sequence motif" description="'HIGH' region" evidence="1">
    <location>
        <begin position="10"/>
        <end position="20"/>
    </location>
</feature>
<feature type="short sequence motif" description="'KMSKS' region" evidence="1">
    <location>
        <begin position="237"/>
        <end position="241"/>
    </location>
</feature>
<feature type="binding site" evidence="1">
    <location>
        <position position="99"/>
    </location>
    <ligand>
        <name>Zn(2+)</name>
        <dbReference type="ChEBI" id="CHEBI:29105"/>
    </ligand>
</feature>
<feature type="binding site" evidence="1">
    <location>
        <position position="101"/>
    </location>
    <ligand>
        <name>Zn(2+)</name>
        <dbReference type="ChEBI" id="CHEBI:29105"/>
    </ligand>
</feature>
<feature type="binding site" evidence="1">
    <location>
        <position position="126"/>
    </location>
    <ligand>
        <name>Zn(2+)</name>
        <dbReference type="ChEBI" id="CHEBI:29105"/>
    </ligand>
</feature>
<feature type="binding site" evidence="1">
    <location>
        <position position="128"/>
    </location>
    <ligand>
        <name>Zn(2+)</name>
        <dbReference type="ChEBI" id="CHEBI:29105"/>
    </ligand>
</feature>
<feature type="binding site" evidence="1">
    <location>
        <position position="240"/>
    </location>
    <ligand>
        <name>ATP</name>
        <dbReference type="ChEBI" id="CHEBI:30616"/>
    </ligand>
</feature>
<keyword id="KW-0030">Aminoacyl-tRNA synthetase</keyword>
<keyword id="KW-0067">ATP-binding</keyword>
<keyword id="KW-0963">Cytoplasm</keyword>
<keyword id="KW-0436">Ligase</keyword>
<keyword id="KW-0479">Metal-binding</keyword>
<keyword id="KW-0547">Nucleotide-binding</keyword>
<keyword id="KW-0648">Protein biosynthesis</keyword>
<keyword id="KW-1185">Reference proteome</keyword>
<keyword id="KW-0862">Zinc</keyword>
<gene>
    <name evidence="1" type="primary">gltX1</name>
    <name type="synonym">gltX-1</name>
    <name type="ordered locus">CBU_0205</name>
</gene>
<name>SYE1_COXBU</name>
<dbReference type="EC" id="6.1.1.17" evidence="1"/>
<dbReference type="EMBL" id="AE016828">
    <property type="protein sequence ID" value="AAO89765.2"/>
    <property type="status" value="ALT_INIT"/>
    <property type="molecule type" value="Genomic_DNA"/>
</dbReference>
<dbReference type="RefSeq" id="NP_819251.2">
    <property type="nucleotide sequence ID" value="NC_002971.3"/>
</dbReference>
<dbReference type="SMR" id="Q83EV3"/>
<dbReference type="STRING" id="227377.CBU_0205"/>
<dbReference type="DNASU" id="1208081"/>
<dbReference type="EnsemblBacteria" id="AAO89765">
    <property type="protein sequence ID" value="AAO89765"/>
    <property type="gene ID" value="CBU_0205"/>
</dbReference>
<dbReference type="GeneID" id="1208081"/>
<dbReference type="KEGG" id="cbu:CBU_0205"/>
<dbReference type="PATRIC" id="fig|227377.7.peg.202"/>
<dbReference type="eggNOG" id="COG0008">
    <property type="taxonomic scope" value="Bacteria"/>
</dbReference>
<dbReference type="HOGENOM" id="CLU_015768_6_0_6"/>
<dbReference type="OrthoDB" id="9807503at2"/>
<dbReference type="Proteomes" id="UP000002671">
    <property type="component" value="Chromosome"/>
</dbReference>
<dbReference type="GO" id="GO:0005829">
    <property type="term" value="C:cytosol"/>
    <property type="evidence" value="ECO:0000318"/>
    <property type="project" value="GO_Central"/>
</dbReference>
<dbReference type="GO" id="GO:0005524">
    <property type="term" value="F:ATP binding"/>
    <property type="evidence" value="ECO:0007669"/>
    <property type="project" value="UniProtKB-UniRule"/>
</dbReference>
<dbReference type="GO" id="GO:0004818">
    <property type="term" value="F:glutamate-tRNA ligase activity"/>
    <property type="evidence" value="ECO:0000318"/>
    <property type="project" value="GO_Central"/>
</dbReference>
<dbReference type="GO" id="GO:0000049">
    <property type="term" value="F:tRNA binding"/>
    <property type="evidence" value="ECO:0007669"/>
    <property type="project" value="InterPro"/>
</dbReference>
<dbReference type="GO" id="GO:0008270">
    <property type="term" value="F:zinc ion binding"/>
    <property type="evidence" value="ECO:0007669"/>
    <property type="project" value="UniProtKB-UniRule"/>
</dbReference>
<dbReference type="GO" id="GO:0006424">
    <property type="term" value="P:glutamyl-tRNA aminoacylation"/>
    <property type="evidence" value="ECO:0000318"/>
    <property type="project" value="GO_Central"/>
</dbReference>
<dbReference type="CDD" id="cd00808">
    <property type="entry name" value="GluRS_core"/>
    <property type="match status" value="1"/>
</dbReference>
<dbReference type="FunFam" id="3.40.50.620:FF:000007">
    <property type="entry name" value="Glutamate--tRNA ligase"/>
    <property type="match status" value="1"/>
</dbReference>
<dbReference type="Gene3D" id="1.10.10.350">
    <property type="match status" value="1"/>
</dbReference>
<dbReference type="Gene3D" id="3.40.50.620">
    <property type="entry name" value="HUPs"/>
    <property type="match status" value="1"/>
</dbReference>
<dbReference type="HAMAP" id="MF_00022">
    <property type="entry name" value="Glu_tRNA_synth_type1"/>
    <property type="match status" value="1"/>
</dbReference>
<dbReference type="InterPro" id="IPR045462">
    <property type="entry name" value="aa-tRNA-synth_I_cd-bd"/>
</dbReference>
<dbReference type="InterPro" id="IPR020751">
    <property type="entry name" value="aa-tRNA-synth_I_codon-bd_sub2"/>
</dbReference>
<dbReference type="InterPro" id="IPR001412">
    <property type="entry name" value="aa-tRNA-synth_I_CS"/>
</dbReference>
<dbReference type="InterPro" id="IPR008925">
    <property type="entry name" value="aa_tRNA-synth_I_cd-bd_sf"/>
</dbReference>
<dbReference type="InterPro" id="IPR004527">
    <property type="entry name" value="Glu-tRNA-ligase_bac/mito"/>
</dbReference>
<dbReference type="InterPro" id="IPR000924">
    <property type="entry name" value="Glu/Gln-tRNA-synth"/>
</dbReference>
<dbReference type="InterPro" id="IPR020058">
    <property type="entry name" value="Glu/Gln-tRNA-synth_Ib_cat-dom"/>
</dbReference>
<dbReference type="InterPro" id="IPR049940">
    <property type="entry name" value="GluQ/Sye"/>
</dbReference>
<dbReference type="InterPro" id="IPR033910">
    <property type="entry name" value="GluRS_core"/>
</dbReference>
<dbReference type="InterPro" id="IPR014729">
    <property type="entry name" value="Rossmann-like_a/b/a_fold"/>
</dbReference>
<dbReference type="NCBIfam" id="TIGR00464">
    <property type="entry name" value="gltX_bact"/>
    <property type="match status" value="1"/>
</dbReference>
<dbReference type="PANTHER" id="PTHR43311">
    <property type="entry name" value="GLUTAMATE--TRNA LIGASE"/>
    <property type="match status" value="1"/>
</dbReference>
<dbReference type="PANTHER" id="PTHR43311:SF2">
    <property type="entry name" value="GLUTAMATE--TRNA LIGASE, MITOCHONDRIAL-RELATED"/>
    <property type="match status" value="1"/>
</dbReference>
<dbReference type="Pfam" id="PF19269">
    <property type="entry name" value="Anticodon_2"/>
    <property type="match status" value="1"/>
</dbReference>
<dbReference type="Pfam" id="PF00749">
    <property type="entry name" value="tRNA-synt_1c"/>
    <property type="match status" value="1"/>
</dbReference>
<dbReference type="PRINTS" id="PR00987">
    <property type="entry name" value="TRNASYNTHGLU"/>
</dbReference>
<dbReference type="SUPFAM" id="SSF48163">
    <property type="entry name" value="An anticodon-binding domain of class I aminoacyl-tRNA synthetases"/>
    <property type="match status" value="1"/>
</dbReference>
<dbReference type="SUPFAM" id="SSF52374">
    <property type="entry name" value="Nucleotidylyl transferase"/>
    <property type="match status" value="1"/>
</dbReference>
<dbReference type="PROSITE" id="PS00178">
    <property type="entry name" value="AA_TRNA_LIGASE_I"/>
    <property type="match status" value="1"/>
</dbReference>
<sequence>MKHIRTRFAPSPTGYLHIGGVRTALFSWLFARQNNGAFILRIEDTDVARSTQASVDAILEGLRWLQIDWNEGPYYQSQRMDRYREVIEQLVKSDDAYRCYCSKERLIELRNTQLKNKQKPRYDGFCRDKAPRQSNEPFVIRFRNPVEGAVVFDDLIRGTISIDNRELDDLIIARSDGGPTYNLTVVVDDWDMKITHVIRGDDHINNTPRQINILHALGAELPHYGHVPMILGPDGKRLSKRHGAVSVLQYRDEGYLPEALMNYLIRLGWAHGDQEIFSREEMVQLFDISAVSRSPAAFNPEKLLWLNQHYLKTVSPTIIAEAFATQLEKAGTDLRNGPSLEQVIALQAERTKTLKEMAQRSLYFYQEVRSYDEKAARKHLLATIVEPLQRVRERLASLPSWEKEAIHEVIVETAQLHQLKLGQLAQPIRVALTGDTVSPPIDATLYLIGRDSALKRLDHAIRFIHQGMG</sequence>
<comment type="function">
    <text evidence="1">Catalyzes the attachment of glutamate to tRNA(Glu) in a two-step reaction: glutamate is first activated by ATP to form Glu-AMP and then transferred to the acceptor end of tRNA(Glu).</text>
</comment>
<comment type="catalytic activity">
    <reaction evidence="1">
        <text>tRNA(Glu) + L-glutamate + ATP = L-glutamyl-tRNA(Glu) + AMP + diphosphate</text>
        <dbReference type="Rhea" id="RHEA:23540"/>
        <dbReference type="Rhea" id="RHEA-COMP:9663"/>
        <dbReference type="Rhea" id="RHEA-COMP:9680"/>
        <dbReference type="ChEBI" id="CHEBI:29985"/>
        <dbReference type="ChEBI" id="CHEBI:30616"/>
        <dbReference type="ChEBI" id="CHEBI:33019"/>
        <dbReference type="ChEBI" id="CHEBI:78442"/>
        <dbReference type="ChEBI" id="CHEBI:78520"/>
        <dbReference type="ChEBI" id="CHEBI:456215"/>
        <dbReference type="EC" id="6.1.1.17"/>
    </reaction>
</comment>
<comment type="cofactor">
    <cofactor evidence="1">
        <name>Zn(2+)</name>
        <dbReference type="ChEBI" id="CHEBI:29105"/>
    </cofactor>
    <text evidence="1">Binds 1 zinc ion per subunit.</text>
</comment>
<comment type="subunit">
    <text evidence="1">Monomer.</text>
</comment>
<comment type="subcellular location">
    <subcellularLocation>
        <location evidence="1">Cytoplasm</location>
    </subcellularLocation>
</comment>
<comment type="similarity">
    <text evidence="1">Belongs to the class-I aminoacyl-tRNA synthetase family. Glutamate--tRNA ligase type 1 subfamily.</text>
</comment>
<comment type="sequence caution" evidence="2">
    <conflict type="erroneous initiation">
        <sequence resource="EMBL-CDS" id="AAO89765"/>
    </conflict>
</comment>
<protein>
    <recommendedName>
        <fullName evidence="1">Glutamate--tRNA ligase 1</fullName>
        <ecNumber evidence="1">6.1.1.17</ecNumber>
    </recommendedName>
    <alternativeName>
        <fullName evidence="1">Glutamyl-tRNA synthetase 1</fullName>
        <shortName evidence="1">GluRS 1</shortName>
    </alternativeName>
</protein>
<proteinExistence type="inferred from homology"/>
<evidence type="ECO:0000255" key="1">
    <source>
        <dbReference type="HAMAP-Rule" id="MF_00022"/>
    </source>
</evidence>
<evidence type="ECO:0000305" key="2"/>
<reference key="1">
    <citation type="journal article" date="2003" name="Proc. Natl. Acad. Sci. U.S.A.">
        <title>Complete genome sequence of the Q-fever pathogen, Coxiella burnetii.</title>
        <authorList>
            <person name="Seshadri R."/>
            <person name="Paulsen I.T."/>
            <person name="Eisen J.A."/>
            <person name="Read T.D."/>
            <person name="Nelson K.E."/>
            <person name="Nelson W.C."/>
            <person name="Ward N.L."/>
            <person name="Tettelin H."/>
            <person name="Davidsen T.M."/>
            <person name="Beanan M.J."/>
            <person name="DeBoy R.T."/>
            <person name="Daugherty S.C."/>
            <person name="Brinkac L.M."/>
            <person name="Madupu R."/>
            <person name="Dodson R.J."/>
            <person name="Khouri H.M."/>
            <person name="Lee K.H."/>
            <person name="Carty H.A."/>
            <person name="Scanlan D."/>
            <person name="Heinzen R.A."/>
            <person name="Thompson H.A."/>
            <person name="Samuel J.E."/>
            <person name="Fraser C.M."/>
            <person name="Heidelberg J.F."/>
        </authorList>
    </citation>
    <scope>NUCLEOTIDE SEQUENCE [LARGE SCALE GENOMIC DNA]</scope>
    <source>
        <strain>RSA 493 / Nine Mile phase I</strain>
    </source>
</reference>
<accession>Q83EV3</accession>